<sequence>MSWLTPEVIDILLTVVKAVVILLVVVTCGAYMSFAERRLLGLFQNRYGPNRVGWGGSLQLLADVLKMMFKEDWIPPFADRGIFTLAPVIAFTSLLITFAIVPVSPTWVVADFNIGVLFFLMMAGLAVYAVLFAGWSSNNKYSLLGAMRASAQTLSYEVFLGLSLMGVVAQAGSFNLGAIVESQAHLWNVVPQFFGFVTFALAGVAVCHRHPFDQPEAEQELADGYHIEYSGMKFGLFFVGEYVGIVTISALMVTLFFGGWQGPWLPPFIWFSIKTAFFMMMFILIRAALPRPRYDQVMALGWKICLPLTLLNLLATAAVILYNAH</sequence>
<gene>
    <name evidence="1" type="primary">nuoH</name>
    <name type="ordered locus">SG1595</name>
</gene>
<dbReference type="EC" id="7.1.1.-" evidence="1"/>
<dbReference type="EMBL" id="AP008232">
    <property type="protein sequence ID" value="BAE74870.1"/>
    <property type="molecule type" value="Genomic_DNA"/>
</dbReference>
<dbReference type="RefSeq" id="WP_011411415.1">
    <property type="nucleotide sequence ID" value="NC_007712.1"/>
</dbReference>
<dbReference type="SMR" id="Q2NSK5"/>
<dbReference type="STRING" id="343509.SG1595"/>
<dbReference type="KEGG" id="sgl:SG1595"/>
<dbReference type="eggNOG" id="COG1005">
    <property type="taxonomic scope" value="Bacteria"/>
</dbReference>
<dbReference type="HOGENOM" id="CLU_015134_0_1_6"/>
<dbReference type="OrthoDB" id="9803734at2"/>
<dbReference type="BioCyc" id="SGLO343509:SGP1_RS14515-MONOMER"/>
<dbReference type="Proteomes" id="UP000001932">
    <property type="component" value="Chromosome"/>
</dbReference>
<dbReference type="GO" id="GO:0005886">
    <property type="term" value="C:plasma membrane"/>
    <property type="evidence" value="ECO:0007669"/>
    <property type="project" value="UniProtKB-SubCell"/>
</dbReference>
<dbReference type="GO" id="GO:0003954">
    <property type="term" value="F:NADH dehydrogenase activity"/>
    <property type="evidence" value="ECO:0007669"/>
    <property type="project" value="TreeGrafter"/>
</dbReference>
<dbReference type="GO" id="GO:0016655">
    <property type="term" value="F:oxidoreductase activity, acting on NAD(P)H, quinone or similar compound as acceptor"/>
    <property type="evidence" value="ECO:0007669"/>
    <property type="project" value="UniProtKB-UniRule"/>
</dbReference>
<dbReference type="GO" id="GO:0048038">
    <property type="term" value="F:quinone binding"/>
    <property type="evidence" value="ECO:0007669"/>
    <property type="project" value="UniProtKB-KW"/>
</dbReference>
<dbReference type="GO" id="GO:0009060">
    <property type="term" value="P:aerobic respiration"/>
    <property type="evidence" value="ECO:0007669"/>
    <property type="project" value="TreeGrafter"/>
</dbReference>
<dbReference type="HAMAP" id="MF_01350">
    <property type="entry name" value="NDH1_NuoH"/>
    <property type="match status" value="1"/>
</dbReference>
<dbReference type="InterPro" id="IPR001694">
    <property type="entry name" value="NADH_UbQ_OxRdtase_su1/FPO"/>
</dbReference>
<dbReference type="InterPro" id="IPR018086">
    <property type="entry name" value="NADH_UbQ_OxRdtase_su1_CS"/>
</dbReference>
<dbReference type="NCBIfam" id="NF004740">
    <property type="entry name" value="PRK06076.1-1"/>
    <property type="match status" value="1"/>
</dbReference>
<dbReference type="NCBIfam" id="NF004741">
    <property type="entry name" value="PRK06076.1-2"/>
    <property type="match status" value="1"/>
</dbReference>
<dbReference type="PANTHER" id="PTHR11432">
    <property type="entry name" value="NADH DEHYDROGENASE SUBUNIT 1"/>
    <property type="match status" value="1"/>
</dbReference>
<dbReference type="PANTHER" id="PTHR11432:SF3">
    <property type="entry name" value="NADH-UBIQUINONE OXIDOREDUCTASE CHAIN 1"/>
    <property type="match status" value="1"/>
</dbReference>
<dbReference type="Pfam" id="PF00146">
    <property type="entry name" value="NADHdh"/>
    <property type="match status" value="1"/>
</dbReference>
<dbReference type="PROSITE" id="PS00668">
    <property type="entry name" value="COMPLEX1_ND1_2"/>
    <property type="match status" value="1"/>
</dbReference>
<feature type="chain" id="PRO_0000244957" description="NADH-quinone oxidoreductase subunit H">
    <location>
        <begin position="1"/>
        <end position="325"/>
    </location>
</feature>
<feature type="transmembrane region" description="Helical" evidence="1">
    <location>
        <begin position="8"/>
        <end position="28"/>
    </location>
</feature>
<feature type="transmembrane region" description="Helical" evidence="1">
    <location>
        <begin position="81"/>
        <end position="101"/>
    </location>
</feature>
<feature type="transmembrane region" description="Helical" evidence="1">
    <location>
        <begin position="114"/>
        <end position="134"/>
    </location>
</feature>
<feature type="transmembrane region" description="Helical" evidence="1">
    <location>
        <begin position="159"/>
        <end position="179"/>
    </location>
</feature>
<feature type="transmembrane region" description="Helical" evidence="1">
    <location>
        <begin position="186"/>
        <end position="206"/>
    </location>
</feature>
<feature type="transmembrane region" description="Helical" evidence="1">
    <location>
        <begin position="237"/>
        <end position="257"/>
    </location>
</feature>
<feature type="transmembrane region" description="Helical" evidence="1">
    <location>
        <begin position="265"/>
        <end position="285"/>
    </location>
</feature>
<feature type="transmembrane region" description="Helical" evidence="1">
    <location>
        <begin position="304"/>
        <end position="324"/>
    </location>
</feature>
<reference key="1">
    <citation type="journal article" date="2006" name="Genome Res.">
        <title>Massive genome erosion and functional adaptations provide insights into the symbiotic lifestyle of Sodalis glossinidius in the tsetse host.</title>
        <authorList>
            <person name="Toh H."/>
            <person name="Weiss B.L."/>
            <person name="Perkin S.A.H."/>
            <person name="Yamashita A."/>
            <person name="Oshima K."/>
            <person name="Hattori M."/>
            <person name="Aksoy S."/>
        </authorList>
    </citation>
    <scope>NUCLEOTIDE SEQUENCE [LARGE SCALE GENOMIC DNA]</scope>
    <source>
        <strain>morsitans</strain>
    </source>
</reference>
<protein>
    <recommendedName>
        <fullName evidence="1">NADH-quinone oxidoreductase subunit H</fullName>
        <ecNumber evidence="1">7.1.1.-</ecNumber>
    </recommendedName>
    <alternativeName>
        <fullName evidence="1">NADH dehydrogenase I subunit H</fullName>
    </alternativeName>
    <alternativeName>
        <fullName evidence="1">NDH-1 subunit H</fullName>
    </alternativeName>
</protein>
<comment type="function">
    <text evidence="1">NDH-1 shuttles electrons from NADH, via FMN and iron-sulfur (Fe-S) centers, to quinones in the respiratory chain. The immediate electron acceptor for the enzyme in this species is believed to be ubiquinone. Couples the redox reaction to proton translocation (for every two electrons transferred, four hydrogen ions are translocated across the cytoplasmic membrane), and thus conserves the redox energy in a proton gradient. This subunit may bind ubiquinone.</text>
</comment>
<comment type="catalytic activity">
    <reaction evidence="1">
        <text>a quinone + NADH + 5 H(+)(in) = a quinol + NAD(+) + 4 H(+)(out)</text>
        <dbReference type="Rhea" id="RHEA:57888"/>
        <dbReference type="ChEBI" id="CHEBI:15378"/>
        <dbReference type="ChEBI" id="CHEBI:24646"/>
        <dbReference type="ChEBI" id="CHEBI:57540"/>
        <dbReference type="ChEBI" id="CHEBI:57945"/>
        <dbReference type="ChEBI" id="CHEBI:132124"/>
    </reaction>
</comment>
<comment type="subunit">
    <text evidence="1">NDH-1 is composed of 13 different subunits. Subunits NuoA, H, J, K, L, M, N constitute the membrane sector of the complex.</text>
</comment>
<comment type="subcellular location">
    <subcellularLocation>
        <location evidence="1">Cell inner membrane</location>
        <topology evidence="1">Multi-pass membrane protein</topology>
    </subcellularLocation>
</comment>
<comment type="similarity">
    <text evidence="1">Belongs to the complex I subunit 1 family.</text>
</comment>
<name>NUOH_SODGM</name>
<keyword id="KW-0997">Cell inner membrane</keyword>
<keyword id="KW-1003">Cell membrane</keyword>
<keyword id="KW-0472">Membrane</keyword>
<keyword id="KW-0520">NAD</keyword>
<keyword id="KW-0874">Quinone</keyword>
<keyword id="KW-1278">Translocase</keyword>
<keyword id="KW-0812">Transmembrane</keyword>
<keyword id="KW-1133">Transmembrane helix</keyword>
<keyword id="KW-0830">Ubiquinone</keyword>
<organism>
    <name type="scientific">Sodalis glossinidius (strain morsitans)</name>
    <dbReference type="NCBI Taxonomy" id="343509"/>
    <lineage>
        <taxon>Bacteria</taxon>
        <taxon>Pseudomonadati</taxon>
        <taxon>Pseudomonadota</taxon>
        <taxon>Gammaproteobacteria</taxon>
        <taxon>Enterobacterales</taxon>
        <taxon>Bruguierivoracaceae</taxon>
        <taxon>Sodalis</taxon>
    </lineage>
</organism>
<evidence type="ECO:0000255" key="1">
    <source>
        <dbReference type="HAMAP-Rule" id="MF_01350"/>
    </source>
</evidence>
<accession>Q2NSK5</accession>
<proteinExistence type="inferred from homology"/>